<proteinExistence type="inferred from homology"/>
<name>RDGC_NEIG2</name>
<reference key="1">
    <citation type="journal article" date="2008" name="J. Bacteriol.">
        <title>Complete genome sequence of Neisseria gonorrhoeae NCCP11945.</title>
        <authorList>
            <person name="Chung G.T."/>
            <person name="Yoo J.S."/>
            <person name="Oh H.B."/>
            <person name="Lee Y.S."/>
            <person name="Cha S.H."/>
            <person name="Kim S.J."/>
            <person name="Yoo C.K."/>
        </authorList>
    </citation>
    <scope>NUCLEOTIDE SEQUENCE [LARGE SCALE GENOMIC DNA]</scope>
    <source>
        <strain>NCCP11945</strain>
    </source>
</reference>
<gene>
    <name evidence="1" type="primary">rdgC</name>
    <name type="ordered locus">NGK_0591</name>
</gene>
<comment type="function">
    <text evidence="1">May be involved in recombination.</text>
</comment>
<comment type="subcellular location">
    <subcellularLocation>
        <location evidence="1">Cytoplasm</location>
        <location evidence="1">Nucleoid</location>
    </subcellularLocation>
</comment>
<comment type="similarity">
    <text evidence="1">Belongs to the RdgC family.</text>
</comment>
<keyword id="KW-0963">Cytoplasm</keyword>
<keyword id="KW-0233">DNA recombination</keyword>
<evidence type="ECO:0000255" key="1">
    <source>
        <dbReference type="HAMAP-Rule" id="MF_00194"/>
    </source>
</evidence>
<accession>B4RKD1</accession>
<protein>
    <recommendedName>
        <fullName evidence="1">Recombination-associated protein RdgC</fullName>
    </recommendedName>
</protein>
<dbReference type="EMBL" id="CP001050">
    <property type="protein sequence ID" value="ACF29282.1"/>
    <property type="molecule type" value="Genomic_DNA"/>
</dbReference>
<dbReference type="RefSeq" id="WP_003687870.1">
    <property type="nucleotide sequence ID" value="NC_011035.1"/>
</dbReference>
<dbReference type="SMR" id="B4RKD1"/>
<dbReference type="GeneID" id="66752762"/>
<dbReference type="KEGG" id="ngk:NGK_0591"/>
<dbReference type="HOGENOM" id="CLU_052038_0_0_4"/>
<dbReference type="Proteomes" id="UP000002564">
    <property type="component" value="Chromosome"/>
</dbReference>
<dbReference type="GO" id="GO:0005737">
    <property type="term" value="C:cytoplasm"/>
    <property type="evidence" value="ECO:0007669"/>
    <property type="project" value="UniProtKB-UniRule"/>
</dbReference>
<dbReference type="GO" id="GO:0009295">
    <property type="term" value="C:nucleoid"/>
    <property type="evidence" value="ECO:0007669"/>
    <property type="project" value="UniProtKB-SubCell"/>
</dbReference>
<dbReference type="GO" id="GO:0006310">
    <property type="term" value="P:DNA recombination"/>
    <property type="evidence" value="ECO:0007669"/>
    <property type="project" value="UniProtKB-UniRule"/>
</dbReference>
<dbReference type="HAMAP" id="MF_00194">
    <property type="entry name" value="RdgC"/>
    <property type="match status" value="1"/>
</dbReference>
<dbReference type="InterPro" id="IPR007476">
    <property type="entry name" value="RdgC"/>
</dbReference>
<dbReference type="NCBIfam" id="NF001464">
    <property type="entry name" value="PRK00321.1-5"/>
    <property type="match status" value="1"/>
</dbReference>
<dbReference type="PANTHER" id="PTHR38103">
    <property type="entry name" value="RECOMBINATION-ASSOCIATED PROTEIN RDGC"/>
    <property type="match status" value="1"/>
</dbReference>
<dbReference type="PANTHER" id="PTHR38103:SF1">
    <property type="entry name" value="RECOMBINATION-ASSOCIATED PROTEIN RDGC"/>
    <property type="match status" value="1"/>
</dbReference>
<dbReference type="Pfam" id="PF04381">
    <property type="entry name" value="RdgC"/>
    <property type="match status" value="1"/>
</dbReference>
<organism>
    <name type="scientific">Neisseria gonorrhoeae (strain NCCP11945)</name>
    <dbReference type="NCBI Taxonomy" id="521006"/>
    <lineage>
        <taxon>Bacteria</taxon>
        <taxon>Pseudomonadati</taxon>
        <taxon>Pseudomonadota</taxon>
        <taxon>Betaproteobacteria</taxon>
        <taxon>Neisseriales</taxon>
        <taxon>Neisseriaceae</taxon>
        <taxon>Neisseria</taxon>
    </lineage>
</organism>
<feature type="chain" id="PRO_1000099066" description="Recombination-associated protein RdgC">
    <location>
        <begin position="1"/>
        <end position="299"/>
    </location>
</feature>
<sequence length="299" mass="33292">MWFKQISFYPLNKEKLPEADVLADKLAEAEFTHCQGLDWFSEGFTAPVSFSPELVFPADFTLRVALKKEEKVLPAGVIRDILEEKVAEIQNNEARNVGRKEKQELKEQITDDLLPRAFTRSSRTEAVFNTRHGYLLVNNAASAKAENILTKLREALGGLEASLPNTKQSPSSLMTGWLLQGHCEGGFELDSDCELKGTGDIVPVVKVSKQDLTADEVVQHVKNGKTVTRLGLVWREQIAFILTQDFTLKRIQYLDVLQEEAESNGDDAAGLAFASQILMAESVSTMLEELVSYLGGWQD</sequence>